<proteinExistence type="evidence at protein level"/>
<dbReference type="EMBL" id="Z72870">
    <property type="protein sequence ID" value="CAA97087.1"/>
    <property type="molecule type" value="Genomic_DNA"/>
</dbReference>
<dbReference type="EMBL" id="M12933">
    <property type="protein sequence ID" value="AAA34990.1"/>
    <property type="molecule type" value="Genomic_DNA"/>
</dbReference>
<dbReference type="EMBL" id="BK006941">
    <property type="protein sequence ID" value="DAA08178.1"/>
    <property type="molecule type" value="Genomic_DNA"/>
</dbReference>
<dbReference type="PIR" id="A02764">
    <property type="entry name" value="R5BY16"/>
</dbReference>
<dbReference type="RefSeq" id="NP_011599.1">
    <property type="nucleotide sequence ID" value="NM_001181214.1"/>
</dbReference>
<dbReference type="PDB" id="2NOQ">
    <property type="method" value="EM"/>
    <property type="resolution" value="7.30 A"/>
    <property type="chains" value="H=7-171"/>
</dbReference>
<dbReference type="PDB" id="3J0Q">
    <property type="method" value="EM"/>
    <property type="resolution" value="10.60 A"/>
    <property type="chains" value="k=7-171"/>
</dbReference>
<dbReference type="PDB" id="4U3M">
    <property type="method" value="X-ray"/>
    <property type="resolution" value="3.00 A"/>
    <property type="chains" value="M1/m1=2-174"/>
</dbReference>
<dbReference type="PDB" id="4U3N">
    <property type="method" value="X-ray"/>
    <property type="resolution" value="3.20 A"/>
    <property type="chains" value="M1/m1=2-174"/>
</dbReference>
<dbReference type="PDB" id="4U3U">
    <property type="method" value="X-ray"/>
    <property type="resolution" value="2.90 A"/>
    <property type="chains" value="M1/m1=2-174"/>
</dbReference>
<dbReference type="PDB" id="4U4N">
    <property type="method" value="X-ray"/>
    <property type="resolution" value="3.10 A"/>
    <property type="chains" value="M1/m1=2-174"/>
</dbReference>
<dbReference type="PDB" id="4U4O">
    <property type="method" value="X-ray"/>
    <property type="resolution" value="3.60 A"/>
    <property type="chains" value="M1/m1=2-174"/>
</dbReference>
<dbReference type="PDB" id="4U4Q">
    <property type="method" value="X-ray"/>
    <property type="resolution" value="3.00 A"/>
    <property type="chains" value="M1/m1=2-174"/>
</dbReference>
<dbReference type="PDB" id="4U4R">
    <property type="method" value="X-ray"/>
    <property type="resolution" value="2.80 A"/>
    <property type="chains" value="M1/m1=2-174"/>
</dbReference>
<dbReference type="PDB" id="4U4U">
    <property type="method" value="X-ray"/>
    <property type="resolution" value="3.00 A"/>
    <property type="chains" value="M1/m1=2-174"/>
</dbReference>
<dbReference type="PDB" id="4U4Y">
    <property type="method" value="X-ray"/>
    <property type="resolution" value="3.20 A"/>
    <property type="chains" value="M1/m1=2-174"/>
</dbReference>
<dbReference type="PDB" id="4U4Z">
    <property type="method" value="X-ray"/>
    <property type="resolution" value="3.10 A"/>
    <property type="chains" value="M1/m1=2-174"/>
</dbReference>
<dbReference type="PDB" id="4U50">
    <property type="method" value="X-ray"/>
    <property type="resolution" value="3.20 A"/>
    <property type="chains" value="M1/m1=2-174"/>
</dbReference>
<dbReference type="PDB" id="4U51">
    <property type="method" value="X-ray"/>
    <property type="resolution" value="3.20 A"/>
    <property type="chains" value="M1/m1=2-174"/>
</dbReference>
<dbReference type="PDB" id="4U52">
    <property type="method" value="X-ray"/>
    <property type="resolution" value="3.00 A"/>
    <property type="chains" value="M1/m1=2-174"/>
</dbReference>
<dbReference type="PDB" id="4U53">
    <property type="method" value="X-ray"/>
    <property type="resolution" value="3.30 A"/>
    <property type="chains" value="M1/m1=2-174"/>
</dbReference>
<dbReference type="PDB" id="4U55">
    <property type="method" value="X-ray"/>
    <property type="resolution" value="3.20 A"/>
    <property type="chains" value="M1/m1=2-174"/>
</dbReference>
<dbReference type="PDB" id="4U56">
    <property type="method" value="X-ray"/>
    <property type="resolution" value="3.45 A"/>
    <property type="chains" value="M1/m1=2-174"/>
</dbReference>
<dbReference type="PDB" id="4U6F">
    <property type="method" value="X-ray"/>
    <property type="resolution" value="3.10 A"/>
    <property type="chains" value="M1/m1=2-174"/>
</dbReference>
<dbReference type="PDB" id="4V8T">
    <property type="method" value="EM"/>
    <property type="resolution" value="8.10 A"/>
    <property type="chains" value="J=1-174"/>
</dbReference>
<dbReference type="PDB" id="5DAT">
    <property type="method" value="X-ray"/>
    <property type="resolution" value="3.15 A"/>
    <property type="chains" value="M1/m1=2-174"/>
</dbReference>
<dbReference type="PDB" id="5DC3">
    <property type="method" value="X-ray"/>
    <property type="resolution" value="3.25 A"/>
    <property type="chains" value="M1/m1=2-174"/>
</dbReference>
<dbReference type="PDB" id="5DGF">
    <property type="method" value="X-ray"/>
    <property type="resolution" value="3.30 A"/>
    <property type="chains" value="M1/m1=2-174"/>
</dbReference>
<dbReference type="PDB" id="5DGV">
    <property type="method" value="X-ray"/>
    <property type="resolution" value="3.10 A"/>
    <property type="chains" value="M1/m1=2-174"/>
</dbReference>
<dbReference type="PDB" id="5I4L">
    <property type="method" value="X-ray"/>
    <property type="resolution" value="3.10 A"/>
    <property type="chains" value="M1/m1=6-174"/>
</dbReference>
<dbReference type="PDB" id="5LYB">
    <property type="method" value="X-ray"/>
    <property type="resolution" value="3.25 A"/>
    <property type="chains" value="M1/m1=6-174"/>
</dbReference>
<dbReference type="PDB" id="5MEI">
    <property type="method" value="X-ray"/>
    <property type="resolution" value="3.50 A"/>
    <property type="chains" value="CM/s=6-174"/>
</dbReference>
<dbReference type="PDB" id="5NDV">
    <property type="method" value="X-ray"/>
    <property type="resolution" value="3.30 A"/>
    <property type="chains" value="M1/m1=6-174"/>
</dbReference>
<dbReference type="PDB" id="5NDW">
    <property type="method" value="X-ray"/>
    <property type="resolution" value="3.70 A"/>
    <property type="chains" value="M1/m1=6-174"/>
</dbReference>
<dbReference type="PDB" id="5OBM">
    <property type="method" value="X-ray"/>
    <property type="resolution" value="3.40 A"/>
    <property type="chains" value="M1/m1=6-174"/>
</dbReference>
<dbReference type="PDB" id="5ON6">
    <property type="method" value="X-ray"/>
    <property type="resolution" value="3.10 A"/>
    <property type="chains" value="CM/s=6-174"/>
</dbReference>
<dbReference type="PDB" id="5TBW">
    <property type="method" value="X-ray"/>
    <property type="resolution" value="3.00 A"/>
    <property type="chains" value="CM/s=6-174"/>
</dbReference>
<dbReference type="PDB" id="5TGA">
    <property type="method" value="X-ray"/>
    <property type="resolution" value="3.30 A"/>
    <property type="chains" value="M1/m1=6-174"/>
</dbReference>
<dbReference type="PDB" id="5TGM">
    <property type="method" value="X-ray"/>
    <property type="resolution" value="3.50 A"/>
    <property type="chains" value="M1/m1=6-174"/>
</dbReference>
<dbReference type="PDB" id="6GQ1">
    <property type="method" value="EM"/>
    <property type="resolution" value="4.40 A"/>
    <property type="chains" value="J=6-174"/>
</dbReference>
<dbReference type="PDB" id="6GQB">
    <property type="method" value="EM"/>
    <property type="resolution" value="3.90 A"/>
    <property type="chains" value="J=6-174"/>
</dbReference>
<dbReference type="PDB" id="6GQV">
    <property type="method" value="EM"/>
    <property type="resolution" value="4.00 A"/>
    <property type="chains" value="J=6-174"/>
</dbReference>
<dbReference type="PDB" id="6HHQ">
    <property type="method" value="X-ray"/>
    <property type="resolution" value="3.10 A"/>
    <property type="chains" value="CM/s=1-174"/>
</dbReference>
<dbReference type="PDB" id="6I7O">
    <property type="method" value="EM"/>
    <property type="resolution" value="5.30 A"/>
    <property type="chains" value="AG/XG=6-174"/>
</dbReference>
<dbReference type="PDB" id="6OIG">
    <property type="method" value="EM"/>
    <property type="resolution" value="3.80 A"/>
    <property type="chains" value="J=6-174"/>
</dbReference>
<dbReference type="PDB" id="6Q8Y">
    <property type="method" value="EM"/>
    <property type="resolution" value="3.10 A"/>
    <property type="chains" value="AG=6-174"/>
</dbReference>
<dbReference type="PDB" id="6R84">
    <property type="method" value="EM"/>
    <property type="resolution" value="3.60 A"/>
    <property type="chains" value="M=6-174"/>
</dbReference>
<dbReference type="PDB" id="6R86">
    <property type="method" value="EM"/>
    <property type="resolution" value="3.40 A"/>
    <property type="chains" value="M=6-174"/>
</dbReference>
<dbReference type="PDB" id="6R87">
    <property type="method" value="EM"/>
    <property type="resolution" value="3.40 A"/>
    <property type="chains" value="M=6-174"/>
</dbReference>
<dbReference type="PDB" id="6S47">
    <property type="method" value="EM"/>
    <property type="resolution" value="3.28 A"/>
    <property type="chains" value="AM=6-174"/>
</dbReference>
<dbReference type="PDB" id="6T4Q">
    <property type="method" value="EM"/>
    <property type="resolution" value="2.60 A"/>
    <property type="chains" value="LJ=6-174"/>
</dbReference>
<dbReference type="PDB" id="6TB3">
    <property type="method" value="EM"/>
    <property type="resolution" value="2.80 A"/>
    <property type="chains" value="AG=6-174"/>
</dbReference>
<dbReference type="PDB" id="6TNU">
    <property type="method" value="EM"/>
    <property type="resolution" value="3.10 A"/>
    <property type="chains" value="AG=6-174"/>
</dbReference>
<dbReference type="PDB" id="6WOO">
    <property type="method" value="EM"/>
    <property type="resolution" value="2.90 A"/>
    <property type="chains" value="J=6-173"/>
</dbReference>
<dbReference type="PDB" id="7AZY">
    <property type="method" value="EM"/>
    <property type="resolution" value="2.88 A"/>
    <property type="chains" value="h=1-174"/>
</dbReference>
<dbReference type="PDB" id="7B7D">
    <property type="method" value="EM"/>
    <property type="resolution" value="3.30 A"/>
    <property type="chains" value="LM=6-174"/>
</dbReference>
<dbReference type="PDB" id="7NRC">
    <property type="method" value="EM"/>
    <property type="resolution" value="3.90 A"/>
    <property type="chains" value="LM=6-174"/>
</dbReference>
<dbReference type="PDB" id="7NRD">
    <property type="method" value="EM"/>
    <property type="resolution" value="4.36 A"/>
    <property type="chains" value="LM=6-174"/>
</dbReference>
<dbReference type="PDB" id="7ZPQ">
    <property type="method" value="EM"/>
    <property type="resolution" value="3.47 A"/>
    <property type="chains" value="BJ=6-174"/>
</dbReference>
<dbReference type="PDB" id="7ZS5">
    <property type="method" value="EM"/>
    <property type="resolution" value="3.20 A"/>
    <property type="chains" value="BL=6-174"/>
</dbReference>
<dbReference type="PDB" id="7ZUX">
    <property type="method" value="EM"/>
    <property type="resolution" value="2.50 A"/>
    <property type="chains" value="EJ=6-174"/>
</dbReference>
<dbReference type="PDB" id="8BIP">
    <property type="method" value="EM"/>
    <property type="resolution" value="3.10 A"/>
    <property type="chains" value="LJ=6-174"/>
</dbReference>
<dbReference type="PDB" id="8BJQ">
    <property type="method" value="EM"/>
    <property type="resolution" value="3.80 A"/>
    <property type="chains" value="LJ=6-174"/>
</dbReference>
<dbReference type="PDB" id="8P4V">
    <property type="method" value="X-ray"/>
    <property type="resolution" value="3.16 A"/>
    <property type="chains" value="CM/s=1-174"/>
</dbReference>
<dbReference type="PDB" id="8XU8">
    <property type="method" value="EM"/>
    <property type="resolution" value="3.40 A"/>
    <property type="chains" value="M=6-174"/>
</dbReference>
<dbReference type="PDB" id="8Y0U">
    <property type="method" value="EM"/>
    <property type="resolution" value="3.59 A"/>
    <property type="chains" value="LJ=1-174"/>
</dbReference>
<dbReference type="PDB" id="8YLD">
    <property type="method" value="EM"/>
    <property type="resolution" value="3.90 A"/>
    <property type="chains" value="M=6-174"/>
</dbReference>
<dbReference type="PDB" id="8YLR">
    <property type="method" value="EM"/>
    <property type="resolution" value="3.90 A"/>
    <property type="chains" value="M=6-174"/>
</dbReference>
<dbReference type="PDB" id="8Z70">
    <property type="method" value="EM"/>
    <property type="resolution" value="3.20 A"/>
    <property type="chains" value="M=6-174"/>
</dbReference>
<dbReference type="PDB" id="8Z71">
    <property type="method" value="EM"/>
    <property type="resolution" value="3.60 A"/>
    <property type="chains" value="M=6-174"/>
</dbReference>
<dbReference type="PDBsum" id="2NOQ"/>
<dbReference type="PDBsum" id="3J0Q"/>
<dbReference type="PDBsum" id="4U3M"/>
<dbReference type="PDBsum" id="4U3N"/>
<dbReference type="PDBsum" id="4U3U"/>
<dbReference type="PDBsum" id="4U4N"/>
<dbReference type="PDBsum" id="4U4O"/>
<dbReference type="PDBsum" id="4U4Q"/>
<dbReference type="PDBsum" id="4U4R"/>
<dbReference type="PDBsum" id="4U4U"/>
<dbReference type="PDBsum" id="4U4Y"/>
<dbReference type="PDBsum" id="4U4Z"/>
<dbReference type="PDBsum" id="4U50"/>
<dbReference type="PDBsum" id="4U51"/>
<dbReference type="PDBsum" id="4U52"/>
<dbReference type="PDBsum" id="4U53"/>
<dbReference type="PDBsum" id="4U55"/>
<dbReference type="PDBsum" id="4U56"/>
<dbReference type="PDBsum" id="4U6F"/>
<dbReference type="PDBsum" id="4V8T"/>
<dbReference type="PDBsum" id="5DAT"/>
<dbReference type="PDBsum" id="5DC3"/>
<dbReference type="PDBsum" id="5DGF"/>
<dbReference type="PDBsum" id="5DGV"/>
<dbReference type="PDBsum" id="5I4L"/>
<dbReference type="PDBsum" id="5LYB"/>
<dbReference type="PDBsum" id="5MEI"/>
<dbReference type="PDBsum" id="5NDV"/>
<dbReference type="PDBsum" id="5NDW"/>
<dbReference type="PDBsum" id="5OBM"/>
<dbReference type="PDBsum" id="5ON6"/>
<dbReference type="PDBsum" id="5TBW"/>
<dbReference type="PDBsum" id="5TGA"/>
<dbReference type="PDBsum" id="5TGM"/>
<dbReference type="PDBsum" id="6GQ1"/>
<dbReference type="PDBsum" id="6GQB"/>
<dbReference type="PDBsum" id="6GQV"/>
<dbReference type="PDBsum" id="6HHQ"/>
<dbReference type="PDBsum" id="6I7O"/>
<dbReference type="PDBsum" id="6OIG"/>
<dbReference type="PDBsum" id="6Q8Y"/>
<dbReference type="PDBsum" id="6R84"/>
<dbReference type="PDBsum" id="6R86"/>
<dbReference type="PDBsum" id="6R87"/>
<dbReference type="PDBsum" id="6S47"/>
<dbReference type="PDBsum" id="6T4Q"/>
<dbReference type="PDBsum" id="6TB3"/>
<dbReference type="PDBsum" id="6TNU"/>
<dbReference type="PDBsum" id="6WOO"/>
<dbReference type="PDBsum" id="7AZY"/>
<dbReference type="PDBsum" id="7B7D"/>
<dbReference type="PDBsum" id="7NRC"/>
<dbReference type="PDBsum" id="7NRD"/>
<dbReference type="PDBsum" id="7ZPQ"/>
<dbReference type="PDBsum" id="7ZS5"/>
<dbReference type="PDBsum" id="7ZUX"/>
<dbReference type="PDBsum" id="8BIP"/>
<dbReference type="PDBsum" id="8BJQ"/>
<dbReference type="PDBsum" id="8P4V"/>
<dbReference type="PDBsum" id="8XU8"/>
<dbReference type="PDBsum" id="8Y0U"/>
<dbReference type="PDBsum" id="8YLD"/>
<dbReference type="PDBsum" id="8YLR"/>
<dbReference type="PDBsum" id="8Z70"/>
<dbReference type="PDBsum" id="8Z71"/>
<dbReference type="EMDB" id="EMD-0047"/>
<dbReference type="EMDB" id="EMD-0048"/>
<dbReference type="EMDB" id="EMD-0049"/>
<dbReference type="EMDB" id="EMD-10098"/>
<dbReference type="EMDB" id="EMD-10377"/>
<dbReference type="EMDB" id="EMD-10397"/>
<dbReference type="EMDB" id="EMD-10431"/>
<dbReference type="EMDB" id="EMD-10537"/>
<dbReference type="EMDB" id="EMD-11951"/>
<dbReference type="EMDB" id="EMD-12081"/>
<dbReference type="EMDB" id="EMD-12534"/>
<dbReference type="EMDB" id="EMD-12535"/>
<dbReference type="EMDB" id="EMD-14926"/>
<dbReference type="EMDB" id="EMD-14979"/>
<dbReference type="EMDB" id="EMD-16086"/>
<dbReference type="EMDB" id="EMD-16090"/>
<dbReference type="EMDB" id="EMD-20077"/>
<dbReference type="EMDB" id="EMD-21859"/>
<dbReference type="EMDB" id="EMD-38660"/>
<dbReference type="EMDB" id="EMD-4427"/>
<dbReference type="EMDB" id="EMD-4474"/>
<dbReference type="EMDB" id="EMD-4751"/>
<dbReference type="EMDB" id="EMD-4752"/>
<dbReference type="EMDB" id="EMD-4753"/>
<dbReference type="SMR" id="Q3E757"/>
<dbReference type="BioGRID" id="33327">
    <property type="interactions" value="386"/>
</dbReference>
<dbReference type="ComplexPortal" id="CPX-1601">
    <property type="entry name" value="60S cytosolic large ribosomal subunit"/>
</dbReference>
<dbReference type="DIP" id="DIP-29386N"/>
<dbReference type="FunCoup" id="Q3E757">
    <property type="interactions" value="1205"/>
</dbReference>
<dbReference type="IntAct" id="Q3E757">
    <property type="interactions" value="97"/>
</dbReference>
<dbReference type="MINT" id="Q3E757"/>
<dbReference type="STRING" id="4932.YGR085C"/>
<dbReference type="iPTMnet" id="Q3E757"/>
<dbReference type="PaxDb" id="4932-YGR085C"/>
<dbReference type="PeptideAtlas" id="Q3E757"/>
<dbReference type="EnsemblFungi" id="YGR085C_mRNA">
    <property type="protein sequence ID" value="YGR085C"/>
    <property type="gene ID" value="YGR085C"/>
</dbReference>
<dbReference type="GeneID" id="852976"/>
<dbReference type="KEGG" id="sce:YGR085C"/>
<dbReference type="AGR" id="SGD:S000003317"/>
<dbReference type="SGD" id="S000003317">
    <property type="gene designation" value="RPL11B"/>
</dbReference>
<dbReference type="VEuPathDB" id="FungiDB:YGR085C"/>
<dbReference type="eggNOG" id="KOG0397">
    <property type="taxonomic scope" value="Eukaryota"/>
</dbReference>
<dbReference type="GeneTree" id="ENSGT00910000144211"/>
<dbReference type="HOGENOM" id="CLU_061015_3_0_1"/>
<dbReference type="InParanoid" id="Q3E757"/>
<dbReference type="OMA" id="MDFYCIM"/>
<dbReference type="OrthoDB" id="1734943at2759"/>
<dbReference type="BioCyc" id="YEAST:G3O-30797-MONOMER"/>
<dbReference type="Reactome" id="R-SCE-156827">
    <property type="pathway name" value="L13a-mediated translational silencing of Ceruloplasmin expression"/>
</dbReference>
<dbReference type="Reactome" id="R-SCE-1799339">
    <property type="pathway name" value="SRP-dependent cotranslational protein targeting to membrane"/>
</dbReference>
<dbReference type="Reactome" id="R-SCE-72689">
    <property type="pathway name" value="Formation of a pool of free 40S subunits"/>
</dbReference>
<dbReference type="Reactome" id="R-SCE-72706">
    <property type="pathway name" value="GTP hydrolysis and joining of the 60S ribosomal subunit"/>
</dbReference>
<dbReference type="Reactome" id="R-SCE-975956">
    <property type="pathway name" value="Nonsense Mediated Decay (NMD) independent of the Exon Junction Complex (EJC)"/>
</dbReference>
<dbReference type="Reactome" id="R-SCE-975957">
    <property type="pathway name" value="Nonsense Mediated Decay (NMD) enhanced by the Exon Junction Complex (EJC)"/>
</dbReference>
<dbReference type="BioGRID-ORCS" id="852976">
    <property type="hits" value="3 hits in 10 CRISPR screens"/>
</dbReference>
<dbReference type="EvolutionaryTrace" id="Q3E757"/>
<dbReference type="PRO" id="PR:Q3E757"/>
<dbReference type="Proteomes" id="UP000002311">
    <property type="component" value="Chromosome VII"/>
</dbReference>
<dbReference type="RNAct" id="Q3E757">
    <property type="molecule type" value="protein"/>
</dbReference>
<dbReference type="GO" id="GO:0005829">
    <property type="term" value="C:cytosol"/>
    <property type="evidence" value="ECO:0000304"/>
    <property type="project" value="Reactome"/>
</dbReference>
<dbReference type="GO" id="GO:0022625">
    <property type="term" value="C:cytosolic large ribosomal subunit"/>
    <property type="evidence" value="ECO:0000314"/>
    <property type="project" value="SGD"/>
</dbReference>
<dbReference type="GO" id="GO:0005634">
    <property type="term" value="C:nucleus"/>
    <property type="evidence" value="ECO:0007669"/>
    <property type="project" value="UniProtKB-SubCell"/>
</dbReference>
<dbReference type="GO" id="GO:0003723">
    <property type="term" value="F:RNA binding"/>
    <property type="evidence" value="ECO:0000318"/>
    <property type="project" value="GO_Central"/>
</dbReference>
<dbReference type="GO" id="GO:0019843">
    <property type="term" value="F:rRNA binding"/>
    <property type="evidence" value="ECO:0007669"/>
    <property type="project" value="UniProtKB-KW"/>
</dbReference>
<dbReference type="GO" id="GO:0003735">
    <property type="term" value="F:structural constituent of ribosome"/>
    <property type="evidence" value="ECO:0000318"/>
    <property type="project" value="GO_Central"/>
</dbReference>
<dbReference type="GO" id="GO:0002181">
    <property type="term" value="P:cytoplasmic translation"/>
    <property type="evidence" value="ECO:0000305"/>
    <property type="project" value="SGD"/>
</dbReference>
<dbReference type="GO" id="GO:0000027">
    <property type="term" value="P:ribosomal large subunit assembly"/>
    <property type="evidence" value="ECO:0000315"/>
    <property type="project" value="SGD"/>
</dbReference>
<dbReference type="GO" id="GO:0006412">
    <property type="term" value="P:translation"/>
    <property type="evidence" value="ECO:0000318"/>
    <property type="project" value="GO_Central"/>
</dbReference>
<dbReference type="FunFam" id="3.30.1440.10:FF:000002">
    <property type="entry name" value="60S ribosomal protein L11"/>
    <property type="match status" value="1"/>
</dbReference>
<dbReference type="Gene3D" id="3.30.1440.10">
    <property type="match status" value="1"/>
</dbReference>
<dbReference type="InterPro" id="IPR002132">
    <property type="entry name" value="Ribosomal_uL5"/>
</dbReference>
<dbReference type="InterPro" id="IPR031309">
    <property type="entry name" value="Ribosomal_uL5_C"/>
</dbReference>
<dbReference type="InterPro" id="IPR020929">
    <property type="entry name" value="Ribosomal_uL5_CS"/>
</dbReference>
<dbReference type="InterPro" id="IPR022803">
    <property type="entry name" value="Ribosomal_uL5_dom_sf"/>
</dbReference>
<dbReference type="InterPro" id="IPR031310">
    <property type="entry name" value="Ribosomal_uL5_N"/>
</dbReference>
<dbReference type="NCBIfam" id="NF003258">
    <property type="entry name" value="PRK04219.1"/>
    <property type="match status" value="1"/>
</dbReference>
<dbReference type="PANTHER" id="PTHR11994">
    <property type="entry name" value="60S RIBOSOMAL PROTEIN L11-RELATED"/>
    <property type="match status" value="1"/>
</dbReference>
<dbReference type="Pfam" id="PF00281">
    <property type="entry name" value="Ribosomal_L5"/>
    <property type="match status" value="1"/>
</dbReference>
<dbReference type="Pfam" id="PF00673">
    <property type="entry name" value="Ribosomal_L5_C"/>
    <property type="match status" value="1"/>
</dbReference>
<dbReference type="PIRSF" id="PIRSF002161">
    <property type="entry name" value="Ribosomal_L5"/>
    <property type="match status" value="1"/>
</dbReference>
<dbReference type="SUPFAM" id="SSF55282">
    <property type="entry name" value="RL5-like"/>
    <property type="match status" value="1"/>
</dbReference>
<dbReference type="PROSITE" id="PS00358">
    <property type="entry name" value="RIBOSOMAL_L5"/>
    <property type="match status" value="1"/>
</dbReference>
<evidence type="ECO:0000269" key="1">
    <source>
    </source>
</evidence>
<evidence type="ECO:0000269" key="2">
    <source>
    </source>
</evidence>
<evidence type="ECO:0000269" key="3">
    <source>
    </source>
</evidence>
<evidence type="ECO:0000269" key="4">
    <source>
    </source>
</evidence>
<evidence type="ECO:0000269" key="5">
    <source>
    </source>
</evidence>
<evidence type="ECO:0000269" key="6">
    <source>
    </source>
</evidence>
<evidence type="ECO:0000303" key="7">
    <source>
    </source>
</evidence>
<evidence type="ECO:0000303" key="8">
    <source>
    </source>
</evidence>
<evidence type="ECO:0000305" key="9"/>
<evidence type="ECO:0000305" key="10">
    <source>
    </source>
</evidence>
<evidence type="ECO:0000305" key="11">
    <source>
    </source>
</evidence>
<evidence type="ECO:0007744" key="12">
    <source>
    </source>
</evidence>
<evidence type="ECO:0007829" key="13">
    <source>
        <dbReference type="PDB" id="4U4Q"/>
    </source>
</evidence>
<evidence type="ECO:0007829" key="14">
    <source>
        <dbReference type="PDB" id="4U4R"/>
    </source>
</evidence>
<evidence type="ECO:0007829" key="15">
    <source>
        <dbReference type="PDB" id="4U4U"/>
    </source>
</evidence>
<reference key="1">
    <citation type="journal article" date="1984" name="Nucleic Acids Res.">
        <title>A comparison of yeast ribosomal protein gene DNA sequences.</title>
        <authorList>
            <person name="Teem J.L."/>
            <person name="Abovich N."/>
            <person name="Kaufer N.F."/>
            <person name="Schwindinger W.F."/>
            <person name="Warner J.R."/>
            <person name="Levy A."/>
            <person name="Woolford J.L. Jr."/>
            <person name="Leer R.J."/>
            <person name="van Raamsdonk-Duin M.M.C."/>
            <person name="Mager W.H."/>
            <person name="Planta R.J."/>
            <person name="Schultz L."/>
            <person name="Friesen J.D."/>
            <person name="Fried H.M."/>
            <person name="Rosbash M."/>
        </authorList>
    </citation>
    <scope>NUCLEOTIDE SEQUENCE [GENOMIC DNA]</scope>
</reference>
<reference key="2">
    <citation type="journal article" date="1997" name="Nature">
        <title>The nucleotide sequence of Saccharomyces cerevisiae chromosome VII.</title>
        <authorList>
            <person name="Tettelin H."/>
            <person name="Agostoni-Carbone M.L."/>
            <person name="Albermann K."/>
            <person name="Albers M."/>
            <person name="Arroyo J."/>
            <person name="Backes U."/>
            <person name="Barreiros T."/>
            <person name="Bertani I."/>
            <person name="Bjourson A.J."/>
            <person name="Brueckner M."/>
            <person name="Bruschi C.V."/>
            <person name="Carignani G."/>
            <person name="Castagnoli L."/>
            <person name="Cerdan E."/>
            <person name="Clemente M.L."/>
            <person name="Coblenz A."/>
            <person name="Coglievina M."/>
            <person name="Coissac E."/>
            <person name="Defoor E."/>
            <person name="Del Bino S."/>
            <person name="Delius H."/>
            <person name="Delneri D."/>
            <person name="de Wergifosse P."/>
            <person name="Dujon B."/>
            <person name="Durand P."/>
            <person name="Entian K.-D."/>
            <person name="Eraso P."/>
            <person name="Escribano V."/>
            <person name="Fabiani L."/>
            <person name="Fartmann B."/>
            <person name="Feroli F."/>
            <person name="Feuermann M."/>
            <person name="Frontali L."/>
            <person name="Garcia-Gonzalez M."/>
            <person name="Garcia-Saez M.I."/>
            <person name="Goffeau A."/>
            <person name="Guerreiro P."/>
            <person name="Hani J."/>
            <person name="Hansen M."/>
            <person name="Hebling U."/>
            <person name="Hernandez K."/>
            <person name="Heumann K."/>
            <person name="Hilger F."/>
            <person name="Hofmann B."/>
            <person name="Indge K.J."/>
            <person name="James C.M."/>
            <person name="Klima R."/>
            <person name="Koetter P."/>
            <person name="Kramer B."/>
            <person name="Kramer W."/>
            <person name="Lauquin G."/>
            <person name="Leuther H."/>
            <person name="Louis E.J."/>
            <person name="Maillier E."/>
            <person name="Marconi A."/>
            <person name="Martegani E."/>
            <person name="Mazon M.J."/>
            <person name="Mazzoni C."/>
            <person name="McReynolds A.D.K."/>
            <person name="Melchioretto P."/>
            <person name="Mewes H.-W."/>
            <person name="Minenkova O."/>
            <person name="Mueller-Auer S."/>
            <person name="Nawrocki A."/>
            <person name="Netter P."/>
            <person name="Neu R."/>
            <person name="Nombela C."/>
            <person name="Oliver S.G."/>
            <person name="Panzeri L."/>
            <person name="Paoluzi S."/>
            <person name="Plevani P."/>
            <person name="Portetelle D."/>
            <person name="Portillo F."/>
            <person name="Potier S."/>
            <person name="Purnelle B."/>
            <person name="Rieger M."/>
            <person name="Riles L."/>
            <person name="Rinaldi T."/>
            <person name="Robben J."/>
            <person name="Rodrigues-Pousada C."/>
            <person name="Rodriguez-Belmonte E."/>
            <person name="Rodriguez-Torres A.M."/>
            <person name="Rose M."/>
            <person name="Ruzzi M."/>
            <person name="Saliola M."/>
            <person name="Sanchez-Perez M."/>
            <person name="Schaefer B."/>
            <person name="Schaefer M."/>
            <person name="Scharfe M."/>
            <person name="Schmidheini T."/>
            <person name="Schreer A."/>
            <person name="Skala J."/>
            <person name="Souciet J.-L."/>
            <person name="Steensma H.Y."/>
            <person name="Talla E."/>
            <person name="Thierry A."/>
            <person name="Vandenbol M."/>
            <person name="van der Aart Q.J.M."/>
            <person name="Van Dyck L."/>
            <person name="Vanoni M."/>
            <person name="Verhasselt P."/>
            <person name="Voet M."/>
            <person name="Volckaert G."/>
            <person name="Wambutt R."/>
            <person name="Watson M.D."/>
            <person name="Weber N."/>
            <person name="Wedler E."/>
            <person name="Wedler H."/>
            <person name="Wipfli P."/>
            <person name="Wolf K."/>
            <person name="Wright L.F."/>
            <person name="Zaccaria P."/>
            <person name="Zimmermann M."/>
            <person name="Zollner A."/>
            <person name="Kleine K."/>
        </authorList>
    </citation>
    <scope>NUCLEOTIDE SEQUENCE [LARGE SCALE GENOMIC DNA]</scope>
    <source>
        <strain>ATCC 204508 / S288c</strain>
    </source>
</reference>
<reference key="3">
    <citation type="journal article" date="2014" name="G3 (Bethesda)">
        <title>The reference genome sequence of Saccharomyces cerevisiae: Then and now.</title>
        <authorList>
            <person name="Engel S.R."/>
            <person name="Dietrich F.S."/>
            <person name="Fisk D.G."/>
            <person name="Binkley G."/>
            <person name="Balakrishnan R."/>
            <person name="Costanzo M.C."/>
            <person name="Dwight S.S."/>
            <person name="Hitz B.C."/>
            <person name="Karra K."/>
            <person name="Nash R.S."/>
            <person name="Weng S."/>
            <person name="Wong E.D."/>
            <person name="Lloyd P."/>
            <person name="Skrzypek M.S."/>
            <person name="Miyasato S.R."/>
            <person name="Simison M."/>
            <person name="Cherry J.M."/>
        </authorList>
    </citation>
    <scope>GENOME REANNOTATION</scope>
    <source>
        <strain>ATCC 204508 / S288c</strain>
    </source>
</reference>
<reference key="4">
    <citation type="journal article" date="1986" name="Mol. Cell. Biol.">
        <title>Tripartite upstream promoter element essential for expression of Saccharomyces cerevisiae ribosomal protein genes.</title>
        <authorList>
            <person name="Rotenberg M.O."/>
            <person name="Woolford J.L. Jr."/>
        </authorList>
    </citation>
    <scope>NUCLEOTIDE SEQUENCE [GENOMIC DNA] OF 1-11</scope>
</reference>
<reference key="5">
    <citation type="journal article" date="1998" name="Yeast">
        <title>The list of cytoplasmic ribosomal proteins of Saccharomyces cerevisiae.</title>
        <authorList>
            <person name="Planta R.J."/>
            <person name="Mager W.H."/>
        </authorList>
    </citation>
    <scope>NOMENCLATURE</scope>
    <scope>SUBUNIT</scope>
</reference>
<reference key="6">
    <citation type="journal article" date="1999" name="J. Biol. Chem.">
        <title>The action of N-terminal acetyltransferases on yeast ribosomal proteins.</title>
        <authorList>
            <person name="Arnold R.J."/>
            <person name="Polevoda B."/>
            <person name="Reilly J.P."/>
            <person name="Sherman F."/>
        </authorList>
    </citation>
    <scope>CLEAVAGE OF INITIATOR METHIONINE</scope>
    <scope>ACETYLATION AT SER-2 BY NATA</scope>
</reference>
<reference key="7">
    <citation type="journal article" date="2003" name="Nature">
        <title>Global analysis of protein localization in budding yeast.</title>
        <authorList>
            <person name="Huh W.-K."/>
            <person name="Falvo J.V."/>
            <person name="Gerke L.C."/>
            <person name="Carroll A.S."/>
            <person name="Howson R.W."/>
            <person name="Weissman J.S."/>
            <person name="O'Shea E.K."/>
        </authorList>
    </citation>
    <scope>SUBCELLULAR LOCATION [LARGE SCALE ANALYSIS]</scope>
</reference>
<reference key="8">
    <citation type="journal article" date="2003" name="Nature">
        <title>Global analysis of protein expression in yeast.</title>
        <authorList>
            <person name="Ghaemmaghami S."/>
            <person name="Huh W.-K."/>
            <person name="Bower K."/>
            <person name="Howson R.W."/>
            <person name="Belle A."/>
            <person name="Dephoure N."/>
            <person name="O'Shea E.K."/>
            <person name="Weissman J.S."/>
        </authorList>
    </citation>
    <scope>LEVEL OF PROTEIN EXPRESSION [LARGE SCALE ANALYSIS]</scope>
</reference>
<reference key="9">
    <citation type="journal article" date="2011" name="Science">
        <title>The structure of the eukaryotic ribosome at 3.0 A resolution.</title>
        <authorList>
            <person name="Ben-Shem A."/>
            <person name="Garreau de Loubresse N."/>
            <person name="Melnikov S."/>
            <person name="Jenner L."/>
            <person name="Yusupova G."/>
            <person name="Yusupov M."/>
        </authorList>
    </citation>
    <scope>SUBUNIT</scope>
    <scope>SUBCELLULAR LOCATION</scope>
</reference>
<reference key="10">
    <citation type="journal article" date="2012" name="Proc. Natl. Acad. Sci. U.S.A.">
        <title>N-terminal acetylome analyses and functional insights of the N-terminal acetyltransferase NatB.</title>
        <authorList>
            <person name="Van Damme P."/>
            <person name="Lasa M."/>
            <person name="Polevoda B."/>
            <person name="Gazquez C."/>
            <person name="Elosegui-Artola A."/>
            <person name="Kim D.S."/>
            <person name="De Juan-Pardo E."/>
            <person name="Demeyer K."/>
            <person name="Hole K."/>
            <person name="Larrea E."/>
            <person name="Timmerman E."/>
            <person name="Prieto J."/>
            <person name="Arnesen T."/>
            <person name="Sherman F."/>
            <person name="Gevaert K."/>
            <person name="Aldabe R."/>
        </authorList>
    </citation>
    <scope>ACETYLATION [LARGE SCALE ANALYSIS] AT SER-2</scope>
    <scope>CLEAVAGE OF INITIATOR METHIONINE [LARGE SCALE ANALYSIS]</scope>
    <scope>IDENTIFICATION BY MASS SPECTROMETRY [LARGE SCALE ANALYSIS]</scope>
</reference>
<reference key="11">
    <citation type="journal article" date="2012" name="Proteomics">
        <title>Methylation of translation-associated proteins in Saccharomyces cerevisiae: Identification of methylated lysines and their methyltransferases.</title>
        <authorList>
            <person name="Couttas T.A."/>
            <person name="Raftery M.J."/>
            <person name="Padula M.P."/>
            <person name="Herbert B.R."/>
            <person name="Wilkins M.R."/>
        </authorList>
    </citation>
    <scope>METHYLATION AT LYS-75</scope>
</reference>
<reference key="12">
    <citation type="journal article" date="2012" name="Science">
        <title>Synchronizing nuclear import of ribosomal proteins with ribosome assembly.</title>
        <authorList>
            <person name="Kressler D."/>
            <person name="Bange G."/>
            <person name="Ogawa Y."/>
            <person name="Stjepanovic G."/>
            <person name="Bradatsch B."/>
            <person name="Pratte D."/>
            <person name="Amlacher S."/>
            <person name="Strauss D."/>
            <person name="Yoneda Y."/>
            <person name="Katahira J."/>
            <person name="Sinning I."/>
            <person name="Hurt E."/>
        </authorList>
    </citation>
    <scope>INTERACTION WITH RPL5 AND SYO1</scope>
    <scope>SUBCELLULAR LOCATION</scope>
</reference>
<reference key="13">
    <citation type="journal article" date="2014" name="Curr. Opin. Struct. Biol.">
        <title>A new system for naming ribosomal proteins.</title>
        <authorList>
            <person name="Ban N."/>
            <person name="Beckmann R."/>
            <person name="Cate J.H.D."/>
            <person name="Dinman J.D."/>
            <person name="Dragon F."/>
            <person name="Ellis S.R."/>
            <person name="Lafontaine D.L.J."/>
            <person name="Lindahl L."/>
            <person name="Liljas A."/>
            <person name="Lipton J.M."/>
            <person name="McAlear M.A."/>
            <person name="Moore P.B."/>
            <person name="Noller H.F."/>
            <person name="Ortega J."/>
            <person name="Panse V.G."/>
            <person name="Ramakrishnan V."/>
            <person name="Spahn C.M.T."/>
            <person name="Steitz T.A."/>
            <person name="Tchorzewski M."/>
            <person name="Tollervey D."/>
            <person name="Warren A.J."/>
            <person name="Williamson J.R."/>
            <person name="Wilson D."/>
            <person name="Yonath A."/>
            <person name="Yusupov M."/>
        </authorList>
    </citation>
    <scope>NOMENCLATURE</scope>
</reference>
<reference key="14">
    <citation type="journal article" date="2023" name="Nat. Struct. Mol. Biol.">
        <title>Structure of nascent 5S RNPs at the crossroad between ribosome assembly and MDM2-p53 pathways.</title>
        <authorList>
            <person name="Castillo Duque de Estrada N.M."/>
            <person name="Thoms M."/>
            <person name="Flemming D."/>
            <person name="Hammaren H.M."/>
            <person name="Buschauer R."/>
            <person name="Ameismeier M."/>
            <person name="Bassler J."/>
            <person name="Beck M."/>
            <person name="Beckmann R."/>
            <person name="Hurt E."/>
        </authorList>
    </citation>
    <scope>SUBUNIT</scope>
</reference>
<reference key="15">
    <citation type="journal article" date="2006" name="Nat. Struct. Mol. Biol.">
        <title>Structure of the ribosome-bound cricket paralysis virus IRES RNA.</title>
        <authorList>
            <person name="Schueler M."/>
            <person name="Connell S.R."/>
            <person name="Lescoute A."/>
            <person name="Giesebrecht J."/>
            <person name="Dabrowski M."/>
            <person name="Schroeer B."/>
            <person name="Mielke T."/>
            <person name="Penczek P.A."/>
            <person name="Westhof E."/>
            <person name="Spahn C.M.T."/>
        </authorList>
    </citation>
    <scope>STRUCTURE BY ELECTRON MICROSCOPY (7.3 ANGSTROMS) OF 7-171</scope>
</reference>
<name>RL11B_YEAST</name>
<protein>
    <recommendedName>
        <fullName evidence="7">Large ribosomal subunit protein uL5B</fullName>
    </recommendedName>
    <alternativeName>
        <fullName evidence="8">60S ribosomal protein L11-B</fullName>
    </alternativeName>
    <alternativeName>
        <fullName>L16</fullName>
    </alternativeName>
    <alternativeName>
        <fullName>RP39</fullName>
    </alternativeName>
    <alternativeName>
        <fullName>YL22</fullName>
    </alternativeName>
</protein>
<gene>
    <name evidence="8" type="primary">RPL11B</name>
    <name type="synonym">RP39B</name>
    <name type="synonym">RPL16B</name>
    <name type="ordered locus">YGR085C</name>
</gene>
<organism>
    <name type="scientific">Saccharomyces cerevisiae (strain ATCC 204508 / S288c)</name>
    <name type="common">Baker's yeast</name>
    <dbReference type="NCBI Taxonomy" id="559292"/>
    <lineage>
        <taxon>Eukaryota</taxon>
        <taxon>Fungi</taxon>
        <taxon>Dikarya</taxon>
        <taxon>Ascomycota</taxon>
        <taxon>Saccharomycotina</taxon>
        <taxon>Saccharomycetes</taxon>
        <taxon>Saccharomycetales</taxon>
        <taxon>Saccharomycetaceae</taxon>
        <taxon>Saccharomyces</taxon>
    </lineage>
</organism>
<sequence length="174" mass="19750">MSTKAQNPMRDLKIEKLVLNISVGESGDRLTRASKVLEQLSGQTPVQSKARYTVRTFGIRRNEKIAVHVTVRGPKAEEILERGLKVKEYQLRDRNFSATGNFGFGIDEHIDLGIKYDPSIGIFGMDFYVVMNRPGARVTRRKRCKGTVGNSHKTTKEDTVSWFKQKYDADVLDK</sequence>
<feature type="initiator methionine" description="Removed" evidence="1 12">
    <location>
        <position position="1"/>
    </location>
</feature>
<feature type="chain" id="PRO_0000125105" description="Large ribosomal subunit protein uL5B">
    <location>
        <begin position="2"/>
        <end position="174"/>
    </location>
</feature>
<feature type="modified residue" description="N-acetylserine" evidence="1 12">
    <location>
        <position position="2"/>
    </location>
</feature>
<feature type="modified residue" description="N6,N6,N6-trimethyllysine" evidence="4">
    <location>
        <position position="75"/>
    </location>
</feature>
<feature type="sequence conflict" description="In Ref. 1." evidence="9" ref="1">
    <original>V</original>
    <variation>A</variation>
    <location>
        <position position="138"/>
    </location>
</feature>
<feature type="strand" evidence="14">
    <location>
        <begin position="14"/>
        <end position="21"/>
    </location>
</feature>
<feature type="strand" evidence="15">
    <location>
        <begin position="25"/>
        <end position="27"/>
    </location>
</feature>
<feature type="helix" evidence="14">
    <location>
        <begin position="28"/>
        <end position="41"/>
    </location>
</feature>
<feature type="strand" evidence="14">
    <location>
        <begin position="46"/>
        <end position="48"/>
    </location>
</feature>
<feature type="strand" evidence="14">
    <location>
        <begin position="55"/>
        <end position="57"/>
    </location>
</feature>
<feature type="strand" evidence="14">
    <location>
        <begin position="66"/>
        <end position="71"/>
    </location>
</feature>
<feature type="helix" evidence="14">
    <location>
        <begin position="74"/>
        <end position="86"/>
    </location>
</feature>
<feature type="turn" evidence="14">
    <location>
        <begin position="87"/>
        <end position="89"/>
    </location>
</feature>
<feature type="strand" evidence="14">
    <location>
        <begin position="90"/>
        <end position="92"/>
    </location>
</feature>
<feature type="strand" evidence="14">
    <location>
        <begin position="93"/>
        <end position="96"/>
    </location>
</feature>
<feature type="strand" evidence="14">
    <location>
        <begin position="102"/>
        <end position="107"/>
    </location>
</feature>
<feature type="helix" evidence="14">
    <location>
        <begin position="109"/>
        <end position="111"/>
    </location>
</feature>
<feature type="turn" evidence="14">
    <location>
        <begin position="118"/>
        <end position="120"/>
    </location>
</feature>
<feature type="strand" evidence="14">
    <location>
        <begin position="125"/>
        <end position="131"/>
    </location>
</feature>
<feature type="turn" evidence="14">
    <location>
        <begin position="134"/>
        <end position="136"/>
    </location>
</feature>
<feature type="helix" evidence="14">
    <location>
        <begin position="137"/>
        <end position="140"/>
    </location>
</feature>
<feature type="strand" evidence="13">
    <location>
        <begin position="141"/>
        <end position="144"/>
    </location>
</feature>
<feature type="helix" evidence="14">
    <location>
        <begin position="150"/>
        <end position="152"/>
    </location>
</feature>
<feature type="helix" evidence="14">
    <location>
        <begin position="156"/>
        <end position="164"/>
    </location>
</feature>
<feature type="turn" evidence="14">
    <location>
        <begin position="165"/>
        <end position="167"/>
    </location>
</feature>
<feature type="strand" evidence="14">
    <location>
        <begin position="170"/>
        <end position="172"/>
    </location>
</feature>
<comment type="function">
    <text evidence="10">Component of the ribosome, a large ribonucleoprotein complex responsible for the synthesis of proteins in the cell. The small ribosomal subunit (SSU) binds messenger RNAs (mRNAs) and translates the encoded message by selecting cognate aminoacyl-transfer RNA (tRNA) molecules. The large subunit (LSU) contains the ribosomal catalytic site termed the peptidyl transferase center (PTC), which catalyzes the formation of peptide bonds, thereby polymerizing the amino acids delivered by tRNAs into a polypeptide chain. The nascent polypeptides leave the ribosome through a tunnel in the LSU and interact with protein factors that function in enzymatic processing, targeting, and the membrane insertion of nascent chains at the exit of the ribosomal tunnel.</text>
</comment>
<comment type="subunit">
    <text evidence="3 5 6 11">Component of the large ribosomal subunit (LSU). Mature yeast ribosomes consist of a small (40S) and a large (60S) subunit. The 40S small subunit contains 1 molecule of ribosomal RNA (18S rRNA) and 33 different proteins (encoded by 57 genes). The large 60S subunit contains 3 rRNA molecules (25S, 5.8S and 5S rRNA) and 46 different proteins (encoded by 81 genes) (PubMed:22096102, PubMed:9559554). Component of a hexameric 5S RNP precursor complex, composed of 5S RNA, RRS1, RPF2, RPL5, RPL11A/RPL11B and SYO1; this complex acts as a precursor for ribosome assembly (PubMed:37291423). RPL11A/RPL11B/uL5 forms a heterotrimeric complex with RPL5/uL18 and SYO1. Interaction of this complex with KAP104 allows the nuclear import of the heterotrimer (PubMed:23118189).</text>
</comment>
<comment type="subcellular location">
    <subcellularLocation>
        <location evidence="3">Cytoplasm</location>
    </subcellularLocation>
    <subcellularLocation>
        <location evidence="5">Nucleus</location>
    </subcellularLocation>
    <text evidence="5">The SYO1-uL5-uL18 complex is transported into the nucleus by KAP104.</text>
</comment>
<comment type="PTM">
    <text evidence="1">N-terminally acetylated by acetyltransferase NatA.</text>
</comment>
<comment type="miscellaneous">
    <text evidence="2">Present with 21200 molecules/cell in log phase SD medium.</text>
</comment>
<comment type="miscellaneous">
    <text evidence="9">There are 2 genes for uL5 in yeast.</text>
</comment>
<comment type="similarity">
    <text evidence="9">Belongs to the universal ribosomal protein uL5 family.</text>
</comment>
<keyword id="KW-0002">3D-structure</keyword>
<keyword id="KW-0007">Acetylation</keyword>
<keyword id="KW-0963">Cytoplasm</keyword>
<keyword id="KW-0488">Methylation</keyword>
<keyword id="KW-0539">Nucleus</keyword>
<keyword id="KW-1185">Reference proteome</keyword>
<keyword id="KW-0687">Ribonucleoprotein</keyword>
<keyword id="KW-0689">Ribosomal protein</keyword>
<keyword id="KW-0694">RNA-binding</keyword>
<keyword id="KW-0699">rRNA-binding</keyword>
<accession>Q3E757</accession>
<accession>D6VUL7</accession>
<accession>P06380</accession>